<organism>
    <name type="scientific">Aeromonas hydrophila</name>
    <dbReference type="NCBI Taxonomy" id="644"/>
    <lineage>
        <taxon>Bacteria</taxon>
        <taxon>Pseudomonadati</taxon>
        <taxon>Pseudomonadota</taxon>
        <taxon>Gammaproteobacteria</taxon>
        <taxon>Aeromonadales</taxon>
        <taxon>Aeromonadaceae</taxon>
        <taxon>Aeromonas</taxon>
    </lineage>
</organism>
<gene>
    <name type="primary">exeD</name>
</gene>
<feature type="signal peptide" evidence="3">
    <location>
        <begin position="1"/>
        <end position="25"/>
    </location>
</feature>
<feature type="chain" id="PRO_0000013097" description="Secretin ExeD">
    <location>
        <begin position="26"/>
        <end position="678"/>
    </location>
</feature>
<feature type="region of interest" description="N0" evidence="2">
    <location>
        <begin position="26"/>
        <end position="122"/>
    </location>
</feature>
<feature type="region of interest" description="N1" evidence="2">
    <location>
        <begin position="124"/>
        <end position="188"/>
    </location>
</feature>
<feature type="region of interest" description="N2" evidence="2">
    <location>
        <begin position="189"/>
        <end position="264"/>
    </location>
</feature>
<feature type="region of interest" description="N3" evidence="2">
    <location>
        <begin position="267"/>
        <end position="348"/>
    </location>
</feature>
<feature type="region of interest" description="Secretin" evidence="2">
    <location>
        <begin position="353"/>
        <end position="602"/>
    </location>
</feature>
<feature type="region of interest" description="S domain" evidence="2">
    <location>
        <begin position="604"/>
        <end position="678"/>
    </location>
</feature>
<feature type="site" description="May serve as a pivot that allows opening of the central gate for substrate egress" evidence="2">
    <location>
        <position position="464"/>
    </location>
</feature>
<sequence length="678" mass="72451">MINKGKGWRLATVAAALMMAGSAWATEYSASFKNADIEEFINTVGKNLSKTIIIEPSVRGKINVRSYDLLNEEQYYQFFLSVLDVYGFAVVPMDNGVLKVVRSKDAKTSAIPVVDETNPGIGDEMVTRVVPVRNVSVRELAPLLRQLNDNAGGGNVVHYDPSNVLLITGRAAVVNRLVEVVRRVDKAGDQEVDIIKLKYASAGEMVRLVTNLNKDGNSQGGNTSLLLAPKVVADERTNSVVVSGEPKARARIIQMVRQLDRDLQSQGNTRVFYLKYGKAKDMVEVLKGVSSSIEADKKGGGTATTAGGGASIGGGKLAISADETTNALVITAQPDVMAELEQVVAKLDIRRAQVLVEAIIVEIADGDGLNLGVQWANTNGGGTQFTNAGPGIGSVAIAAKDYKDNGTTTGLAKLAENFNGMAAGFYQGNWAMLVTALSTNTKSDILSTPSIVTMDNKEASFNVGQEVPVQTGTQNSTSGDTTFSTIERKTVGTKLVVTPQINEGDSVLLTIEQEVSSVGKQATGTDGLGPTFDTRTVKNAVLVKSGETVVLGGLMDEQTKEEVSKVPLLGDIPVLGYLFRSTSNNTSKRNLMVFIRPTILRDANVYSGISSNKYTLFRAQQLDAVAQEGYATSPDRQVLPEYGQDVTMSPEAQKQIELMKTHQQATADGVQPFVQGNK</sequence>
<dbReference type="EMBL" id="X66504">
    <property type="protein sequence ID" value="CAA47124.1"/>
    <property type="molecule type" value="Genomic_DNA"/>
</dbReference>
<dbReference type="PIR" id="S22668">
    <property type="entry name" value="S22668"/>
</dbReference>
<dbReference type="PDB" id="6I1X">
    <property type="method" value="EM"/>
    <property type="resolution" value="3.70 A"/>
    <property type="chains" value="A/B/C/D/E/F/G/H/I/J/K/L/M/N/O=122-645"/>
</dbReference>
<dbReference type="PDBsum" id="6I1X"/>
<dbReference type="EMDB" id="EMD-0326"/>
<dbReference type="SMR" id="P31780"/>
<dbReference type="eggNOG" id="COG1450">
    <property type="taxonomic scope" value="Bacteria"/>
</dbReference>
<dbReference type="PHI-base" id="PHI:11440"/>
<dbReference type="GO" id="GO:0009279">
    <property type="term" value="C:cell outer membrane"/>
    <property type="evidence" value="ECO:0007669"/>
    <property type="project" value="UniProtKB-SubCell"/>
</dbReference>
<dbReference type="GO" id="GO:0015627">
    <property type="term" value="C:type II protein secretion system complex"/>
    <property type="evidence" value="ECO:0007669"/>
    <property type="project" value="InterPro"/>
</dbReference>
<dbReference type="GO" id="GO:0015628">
    <property type="term" value="P:protein secretion by the type II secretion system"/>
    <property type="evidence" value="ECO:0007669"/>
    <property type="project" value="InterPro"/>
</dbReference>
<dbReference type="Gene3D" id="3.30.1370.120">
    <property type="match status" value="3"/>
</dbReference>
<dbReference type="InterPro" id="IPR050810">
    <property type="entry name" value="Bact_Secretion_Sys_Channel"/>
</dbReference>
<dbReference type="InterPro" id="IPR049371">
    <property type="entry name" value="GspD-like_N0"/>
</dbReference>
<dbReference type="InterPro" id="IPR001775">
    <property type="entry name" value="GspD/PilQ"/>
</dbReference>
<dbReference type="InterPro" id="IPR005644">
    <property type="entry name" value="NolW-like"/>
</dbReference>
<dbReference type="InterPro" id="IPR038591">
    <property type="entry name" value="NolW-like_sf"/>
</dbReference>
<dbReference type="InterPro" id="IPR004846">
    <property type="entry name" value="T2SS/T3SS_dom"/>
</dbReference>
<dbReference type="InterPro" id="IPR013356">
    <property type="entry name" value="T2SS_GspD"/>
</dbReference>
<dbReference type="InterPro" id="IPR004845">
    <property type="entry name" value="T2SS_GspD_CS"/>
</dbReference>
<dbReference type="NCBIfam" id="TIGR02517">
    <property type="entry name" value="type_II_gspD"/>
    <property type="match status" value="1"/>
</dbReference>
<dbReference type="PANTHER" id="PTHR30332">
    <property type="entry name" value="PROBABLE GENERAL SECRETION PATHWAY PROTEIN D"/>
    <property type="match status" value="1"/>
</dbReference>
<dbReference type="PANTHER" id="PTHR30332:SF24">
    <property type="entry name" value="SECRETIN GSPD-RELATED"/>
    <property type="match status" value="1"/>
</dbReference>
<dbReference type="Pfam" id="PF00263">
    <property type="entry name" value="Secretin"/>
    <property type="match status" value="1"/>
</dbReference>
<dbReference type="Pfam" id="PF03958">
    <property type="entry name" value="Secretin_N"/>
    <property type="match status" value="3"/>
</dbReference>
<dbReference type="Pfam" id="PF21305">
    <property type="entry name" value="type_II_gspD_N0"/>
    <property type="match status" value="1"/>
</dbReference>
<dbReference type="PRINTS" id="PR00811">
    <property type="entry name" value="BCTERIALGSPD"/>
</dbReference>
<dbReference type="PROSITE" id="PS00875">
    <property type="entry name" value="T2SP_D"/>
    <property type="match status" value="1"/>
</dbReference>
<name>GSPD_AERHY</name>
<protein>
    <recommendedName>
        <fullName>Secretin ExeD</fullName>
    </recommendedName>
    <alternativeName>
        <fullName>General secretion pathway protein D</fullName>
    </alternativeName>
    <alternativeName>
        <fullName>Type II secretion system protein D</fullName>
        <shortName>T2SS protein D</shortName>
    </alternativeName>
</protein>
<proteinExistence type="evidence at protein level"/>
<comment type="function">
    <text evidence="1 2">Involved in a type II secretion system (T2SS, formerly general secretion pathway, GSP) for the export of proteins (By similarity). This subunit forms the outer membrane channel (By similarity).</text>
</comment>
<comment type="subunit">
    <text evidence="2">Forms a cylindrical channel with 15 subunits.</text>
</comment>
<comment type="subcellular location">
    <subcellularLocation>
        <location evidence="1">Cell outer membrane</location>
    </subcellularLocation>
    <text evidence="2">Most of the protein is in the periplasm which it traverses to contact proteins of the cell inner membrane.</text>
</comment>
<comment type="domain">
    <text evidence="2">The N0, N1, N2 and N3 domains are periplasmic, while the secretin and S domains form a channel that is partially inserted in the outer membrane. The N1, N2 and N3 domains each form a periplasmic ring. The secretin domain forms a double beta-barrel structure; the outer barrel has a diameter of about 110 Angstroms while the inner barrel forms the central gate with a small pore in the closed state.</text>
</comment>
<comment type="similarity">
    <text evidence="4">Belongs to the bacterial secretin family. GSP D subfamily.</text>
</comment>
<keyword id="KW-0002">3D-structure</keyword>
<keyword id="KW-0998">Cell outer membrane</keyword>
<keyword id="KW-0472">Membrane</keyword>
<keyword id="KW-0653">Protein transport</keyword>
<keyword id="KW-0732">Signal</keyword>
<keyword id="KW-0812">Transmembrane</keyword>
<keyword id="KW-1134">Transmembrane beta strand</keyword>
<keyword id="KW-0813">Transport</keyword>
<evidence type="ECO:0000250" key="1">
    <source>
        <dbReference type="UniProtKB" id="E3PJ86"/>
    </source>
</evidence>
<evidence type="ECO:0000250" key="2">
    <source>
        <dbReference type="UniProtKB" id="P45779"/>
    </source>
</evidence>
<evidence type="ECO:0000255" key="3"/>
<evidence type="ECO:0000305" key="4"/>
<reference key="1">
    <citation type="submission" date="1994-09" db="EMBL/GenBank/DDBJ databases">
        <authorList>
            <person name="Howard S.P."/>
        </authorList>
    </citation>
    <scope>NUCLEOTIDE SEQUENCE [GENOMIC DNA]</scope>
    <source>
        <strain>Ah65</strain>
    </source>
</reference>
<reference key="2">
    <citation type="journal article" date="1992" name="Mol. Microbiol.">
        <title>The Aeromonas hydrophila exeE gene, required both for protein secretion and normal outer membrane biogenesis, is a member of a general secretion pathway.</title>
        <authorList>
            <person name="Jiang B."/>
            <person name="Howard S.P."/>
        </authorList>
    </citation>
    <scope>NUCLEOTIDE SEQUENCE [GENOMIC DNA] OF 408-678</scope>
    <source>
        <strain>Ah65</strain>
    </source>
</reference>
<accession>P31780</accession>